<evidence type="ECO:0000250" key="1"/>
<evidence type="ECO:0000250" key="2">
    <source>
        <dbReference type="UniProtKB" id="Q9FHE4"/>
    </source>
</evidence>
<evidence type="ECO:0000255" key="3">
    <source>
        <dbReference type="PROSITE-ProRule" id="PRU00175"/>
    </source>
</evidence>
<evidence type="ECO:0000269" key="4">
    <source>
    </source>
</evidence>
<evidence type="ECO:0000269" key="5">
    <source>
    </source>
</evidence>
<evidence type="ECO:0000305" key="6"/>
<reference key="1">
    <citation type="journal article" date="2000" name="DNA Res.">
        <title>Structural analysis of Arabidopsis thaliana chromosome 3. I. Sequence features of the regions of 4,504,864 bp covered by sixty P1 and TAC clones.</title>
        <authorList>
            <person name="Sato S."/>
            <person name="Nakamura Y."/>
            <person name="Kaneko T."/>
            <person name="Katoh T."/>
            <person name="Asamizu E."/>
            <person name="Tabata S."/>
        </authorList>
    </citation>
    <scope>NUCLEOTIDE SEQUENCE [LARGE SCALE GENOMIC DNA]</scope>
    <source>
        <strain>cv. Columbia</strain>
    </source>
</reference>
<reference key="2">
    <citation type="journal article" date="2017" name="Plant J.">
        <title>Araport11: a complete reannotation of the Arabidopsis thaliana reference genome.</title>
        <authorList>
            <person name="Cheng C.Y."/>
            <person name="Krishnakumar V."/>
            <person name="Chan A.P."/>
            <person name="Thibaud-Nissen F."/>
            <person name="Schobel S."/>
            <person name="Town C.D."/>
        </authorList>
    </citation>
    <scope>GENOME REANNOTATION</scope>
    <source>
        <strain>cv. Columbia</strain>
    </source>
</reference>
<reference key="3">
    <citation type="journal article" date="2002" name="Science">
        <title>Functional annotation of a full-length Arabidopsis cDNA collection.</title>
        <authorList>
            <person name="Seki M."/>
            <person name="Narusaka M."/>
            <person name="Kamiya A."/>
            <person name="Ishida J."/>
            <person name="Satou M."/>
            <person name="Sakurai T."/>
            <person name="Nakajima M."/>
            <person name="Enju A."/>
            <person name="Akiyama K."/>
            <person name="Oono Y."/>
            <person name="Muramatsu M."/>
            <person name="Hayashizaki Y."/>
            <person name="Kawai J."/>
            <person name="Carninci P."/>
            <person name="Itoh M."/>
            <person name="Ishii Y."/>
            <person name="Arakawa T."/>
            <person name="Shibata K."/>
            <person name="Shinagawa A."/>
            <person name="Shinozaki K."/>
        </authorList>
    </citation>
    <scope>NUCLEOTIDE SEQUENCE [LARGE SCALE MRNA]</scope>
    <source>
        <strain>cv. Columbia</strain>
    </source>
</reference>
<reference key="4">
    <citation type="journal article" date="2003" name="Science">
        <title>Empirical analysis of transcriptional activity in the Arabidopsis genome.</title>
        <authorList>
            <person name="Yamada K."/>
            <person name="Lim J."/>
            <person name="Dale J.M."/>
            <person name="Chen H."/>
            <person name="Shinn P."/>
            <person name="Palm C.J."/>
            <person name="Southwick A.M."/>
            <person name="Wu H.C."/>
            <person name="Kim C.J."/>
            <person name="Nguyen M."/>
            <person name="Pham P.K."/>
            <person name="Cheuk R.F."/>
            <person name="Karlin-Newmann G."/>
            <person name="Liu S.X."/>
            <person name="Lam B."/>
            <person name="Sakano H."/>
            <person name="Wu T."/>
            <person name="Yu G."/>
            <person name="Miranda M."/>
            <person name="Quach H.L."/>
            <person name="Tripp M."/>
            <person name="Chang C.H."/>
            <person name="Lee J.M."/>
            <person name="Toriumi M.J."/>
            <person name="Chan M.M."/>
            <person name="Tang C.C."/>
            <person name="Onodera C.S."/>
            <person name="Deng J.M."/>
            <person name="Akiyama K."/>
            <person name="Ansari Y."/>
            <person name="Arakawa T."/>
            <person name="Banh J."/>
            <person name="Banno F."/>
            <person name="Bowser L."/>
            <person name="Brooks S.Y."/>
            <person name="Carninci P."/>
            <person name="Chao Q."/>
            <person name="Choy N."/>
            <person name="Enju A."/>
            <person name="Goldsmith A.D."/>
            <person name="Gurjal M."/>
            <person name="Hansen N.F."/>
            <person name="Hayashizaki Y."/>
            <person name="Johnson-Hopson C."/>
            <person name="Hsuan V.W."/>
            <person name="Iida K."/>
            <person name="Karnes M."/>
            <person name="Khan S."/>
            <person name="Koesema E."/>
            <person name="Ishida J."/>
            <person name="Jiang P.X."/>
            <person name="Jones T."/>
            <person name="Kawai J."/>
            <person name="Kamiya A."/>
            <person name="Meyers C."/>
            <person name="Nakajima M."/>
            <person name="Narusaka M."/>
            <person name="Seki M."/>
            <person name="Sakurai T."/>
            <person name="Satou M."/>
            <person name="Tamse R."/>
            <person name="Vaysberg M."/>
            <person name="Wallender E.K."/>
            <person name="Wong C."/>
            <person name="Yamamura Y."/>
            <person name="Yuan S."/>
            <person name="Shinozaki K."/>
            <person name="Davis R.W."/>
            <person name="Theologis A."/>
            <person name="Ecker J.R."/>
        </authorList>
    </citation>
    <scope>NUCLEOTIDE SEQUENCE [LARGE SCALE MRNA]</scope>
    <source>
        <strain>cv. Columbia</strain>
    </source>
</reference>
<reference key="5">
    <citation type="submission" date="2002-03" db="EMBL/GenBank/DDBJ databases">
        <title>Full-length cDNA from Arabidopsis thaliana.</title>
        <authorList>
            <person name="Brover V.V."/>
            <person name="Troukhan M.E."/>
            <person name="Alexandrov N.A."/>
            <person name="Lu Y.-P."/>
            <person name="Flavell R.B."/>
            <person name="Feldmann K.A."/>
        </authorList>
    </citation>
    <scope>NUCLEOTIDE SEQUENCE [LARGE SCALE MRNA]</scope>
</reference>
<reference key="6">
    <citation type="journal article" date="2010" name="Plant Physiol.">
        <title>The Arabidopsis Botrytis Susceptible1 Interactor defines a subclass of RING E3 ligases that regulate pathogen and stress responses.</title>
        <authorList>
            <person name="Luo H."/>
            <person name="Laluk K."/>
            <person name="Lai Z."/>
            <person name="Veronese P."/>
            <person name="Song F."/>
            <person name="Mengiste T."/>
        </authorList>
    </citation>
    <scope>IDENTIFICATION</scope>
    <scope>INDUCTION BY PATHOGEN; SALICYLIC ACID; GIBBERELLIC ACID; ACC; METHYL JASMONATE AND SALT</scope>
    <scope>DISRUPTION PHENOTYPE</scope>
</reference>
<reference key="7">
    <citation type="journal article" date="2013" name="Plant Cell">
        <title>DELLA proteins and their interacting RING Finger proteins repress gibberellin responses by binding to the promoters of a subset of gibberellin-responsive genes in Arabidopsis.</title>
        <authorList>
            <person name="Park J."/>
            <person name="Nguyen K.T."/>
            <person name="Park E."/>
            <person name="Jeon J.S."/>
            <person name="Choi G."/>
        </authorList>
    </citation>
    <scope>FUNCTION</scope>
    <scope>INTERACTION WITH GAI; RGA; RGL1; RGL2 AND RGL3</scope>
    <scope>DISRUPTION PHENOTYPE</scope>
</reference>
<keyword id="KW-0479">Metal-binding</keyword>
<keyword id="KW-0611">Plant defense</keyword>
<keyword id="KW-1185">Reference proteome</keyword>
<keyword id="KW-0808">Transferase</keyword>
<keyword id="KW-0833">Ubl conjugation pathway</keyword>
<keyword id="KW-0862">Zinc</keyword>
<keyword id="KW-0863">Zinc-finger</keyword>
<protein>
    <recommendedName>
        <fullName>Probable BOI-related E3 ubiquitin-protein ligase 3</fullName>
        <ecNumber evidence="2">2.3.2.27</ecNumber>
    </recommendedName>
    <alternativeName>
        <fullName evidence="6">RING-type E3 ubiquitin transferase BRG3</fullName>
    </alternativeName>
</protein>
<proteinExistence type="evidence at protein level"/>
<comment type="function">
    <text evidence="5">Probable E3 ubiquitin-protein ligase. Has no effect on the stability of the DELLA proteins.</text>
</comment>
<comment type="catalytic activity">
    <reaction evidence="2">
        <text>S-ubiquitinyl-[E2 ubiquitin-conjugating enzyme]-L-cysteine + [acceptor protein]-L-lysine = [E2 ubiquitin-conjugating enzyme]-L-cysteine + N(6)-ubiquitinyl-[acceptor protein]-L-lysine.</text>
        <dbReference type="EC" id="2.3.2.27"/>
    </reaction>
</comment>
<comment type="pathway">
    <text>Protein degradation; proteasomal ubiquitin-dependent pathway.</text>
</comment>
<comment type="subunit">
    <text evidence="5">Interacts with the DELLA proteins GAI, RGA, RGL1, RGL2 and RGL3.</text>
</comment>
<comment type="induction">
    <text evidence="4">Down-regulated by pathogen, salicylic acid and 1-aminocyclopropane-1-carboxylic acid (ACC). Up-regulated by salt, gibberellic acid and methyl jasmonate.</text>
</comment>
<comment type="domain">
    <text evidence="1">The RING-type zinc finger domain mediates binding to an E2 ubiquitin-conjugating enzyme.</text>
</comment>
<comment type="disruption phenotype">
    <text evidence="4 5">No visible phenotype. Decreased resistance to B.cinerea and increased cell death upon pathogen infection. Boi, brg1, brg2 and brg3 quadruple mutant shows a higher GA signaling resulting in a higher seed germination in the presence of paclobutrazol, precocious juvenile-to-adult phase transition and early flowering.</text>
</comment>
<dbReference type="EC" id="2.3.2.27" evidence="2"/>
<dbReference type="EMBL" id="AB026645">
    <property type="protein sequence ID" value="BAB02499.1"/>
    <property type="molecule type" value="Genomic_DNA"/>
</dbReference>
<dbReference type="EMBL" id="CP002686">
    <property type="protein sequence ID" value="AEE75262.1"/>
    <property type="molecule type" value="Genomic_DNA"/>
</dbReference>
<dbReference type="EMBL" id="AK118454">
    <property type="protein sequence ID" value="BAC43062.1"/>
    <property type="molecule type" value="mRNA"/>
</dbReference>
<dbReference type="EMBL" id="BT006236">
    <property type="protein sequence ID" value="AAP12885.1"/>
    <property type="molecule type" value="mRNA"/>
</dbReference>
<dbReference type="EMBL" id="AY088707">
    <property type="protein sequence ID" value="AAM67026.1"/>
    <property type="molecule type" value="mRNA"/>
</dbReference>
<dbReference type="RefSeq" id="NP_566438.1">
    <property type="nucleotide sequence ID" value="NM_112128.5"/>
</dbReference>
<dbReference type="SMR" id="Q9LDD1"/>
<dbReference type="BioGRID" id="5811">
    <property type="interactions" value="2"/>
</dbReference>
<dbReference type="FunCoup" id="Q9LDD1">
    <property type="interactions" value="216"/>
</dbReference>
<dbReference type="STRING" id="3702.Q9LDD1"/>
<dbReference type="iPTMnet" id="Q9LDD1"/>
<dbReference type="PaxDb" id="3702-AT3G12920.1"/>
<dbReference type="ProteomicsDB" id="240553"/>
<dbReference type="EnsemblPlants" id="AT3G12920.1">
    <property type="protein sequence ID" value="AT3G12920.1"/>
    <property type="gene ID" value="AT3G12920"/>
</dbReference>
<dbReference type="GeneID" id="820477"/>
<dbReference type="Gramene" id="AT3G12920.1">
    <property type="protein sequence ID" value="AT3G12920.1"/>
    <property type="gene ID" value="AT3G12920"/>
</dbReference>
<dbReference type="KEGG" id="ath:AT3G12920"/>
<dbReference type="Araport" id="AT3G12920"/>
<dbReference type="TAIR" id="AT3G12920">
    <property type="gene designation" value="BRG3"/>
</dbReference>
<dbReference type="eggNOG" id="KOG1100">
    <property type="taxonomic scope" value="Eukaryota"/>
</dbReference>
<dbReference type="HOGENOM" id="CLU_038018_3_1_1"/>
<dbReference type="InParanoid" id="Q9LDD1"/>
<dbReference type="OMA" id="PICKSNK"/>
<dbReference type="PhylomeDB" id="Q9LDD1"/>
<dbReference type="UniPathway" id="UPA00144"/>
<dbReference type="PRO" id="PR:Q9LDD1"/>
<dbReference type="Proteomes" id="UP000006548">
    <property type="component" value="Chromosome 3"/>
</dbReference>
<dbReference type="ExpressionAtlas" id="Q9LDD1">
    <property type="expression patterns" value="baseline and differential"/>
</dbReference>
<dbReference type="GO" id="GO:0005634">
    <property type="term" value="C:nucleus"/>
    <property type="evidence" value="ECO:0007005"/>
    <property type="project" value="TAIR"/>
</dbReference>
<dbReference type="GO" id="GO:0016740">
    <property type="term" value="F:transferase activity"/>
    <property type="evidence" value="ECO:0007669"/>
    <property type="project" value="UniProtKB-KW"/>
</dbReference>
<dbReference type="GO" id="GO:0008270">
    <property type="term" value="F:zinc ion binding"/>
    <property type="evidence" value="ECO:0007669"/>
    <property type="project" value="UniProtKB-KW"/>
</dbReference>
<dbReference type="GO" id="GO:0006952">
    <property type="term" value="P:defense response"/>
    <property type="evidence" value="ECO:0007669"/>
    <property type="project" value="UniProtKB-KW"/>
</dbReference>
<dbReference type="GO" id="GO:0043161">
    <property type="term" value="P:proteasome-mediated ubiquitin-dependent protein catabolic process"/>
    <property type="evidence" value="ECO:0007669"/>
    <property type="project" value="UniProtKB-UniPathway"/>
</dbReference>
<dbReference type="GO" id="GO:0043067">
    <property type="term" value="P:regulation of programmed cell death"/>
    <property type="evidence" value="ECO:0000315"/>
    <property type="project" value="TAIR"/>
</dbReference>
<dbReference type="CDD" id="cd16649">
    <property type="entry name" value="mRING-HC-C3HC5_CGRF1-like"/>
    <property type="match status" value="1"/>
</dbReference>
<dbReference type="FunFam" id="3.30.40.10:FF:000541">
    <property type="entry name" value="BOI-related E3 ubiquitin-protein ligase 1"/>
    <property type="match status" value="1"/>
</dbReference>
<dbReference type="Gene3D" id="3.30.40.10">
    <property type="entry name" value="Zinc/RING finger domain, C3HC4 (zinc finger)"/>
    <property type="match status" value="1"/>
</dbReference>
<dbReference type="InterPro" id="IPR001841">
    <property type="entry name" value="Znf_RING"/>
</dbReference>
<dbReference type="InterPro" id="IPR013083">
    <property type="entry name" value="Znf_RING/FYVE/PHD"/>
</dbReference>
<dbReference type="PANTHER" id="PTHR42647:SF32">
    <property type="entry name" value="BOI-RELATED E3 UBIQUITIN-PROTEIN LIGASE 3-RELATED"/>
    <property type="match status" value="1"/>
</dbReference>
<dbReference type="PANTHER" id="PTHR42647">
    <property type="entry name" value="SBP (S-RIBONUCLEASE BINDING PROTEIN) FAMILY PROTEIN"/>
    <property type="match status" value="1"/>
</dbReference>
<dbReference type="Pfam" id="PF13920">
    <property type="entry name" value="zf-C3HC4_3"/>
    <property type="match status" value="1"/>
</dbReference>
<dbReference type="PIRSF" id="PIRSF036836">
    <property type="entry name" value="RNase_bind_SBP1"/>
    <property type="match status" value="1"/>
</dbReference>
<dbReference type="PROSITE" id="PS50089">
    <property type="entry name" value="ZF_RING_2"/>
    <property type="match status" value="1"/>
</dbReference>
<accession>Q9LDD1</accession>
<accession>Q8L903</accession>
<name>BRG3_ARATH</name>
<sequence>MAVEAHHLNPLFSSNREMIHPVEASGVVYNTQMRYGTVPTFNPTVECQTSLFNPIYNISPVDRLVHQSMKPTIQSVDSSLTFNSDNNVDFLRPVSSRKRSREESVVLNPSAYMQIQKNPTDPLMFLGQDLSSNVQQHHFDIDRLISNHVERMRMEIEEKRKTQGRRIVEAVEQGLMKTLRAKDDEINHIGKLNLFLEEKVKSLCVENQIWRDVAQSNEATVNALRSNLQQVLAAVERNRWEEPPTVADDAQSCCGSNDEGDSEEERWKLAGEAQDTKKMCRVGMSMCRSCGKGEASVLLLPCRHMCLCSVCGSSLNTCPICKSPKTASLHVNLSS</sequence>
<feature type="chain" id="PRO_0000424719" description="Probable BOI-related E3 ubiquitin-protein ligase 3">
    <location>
        <begin position="1"/>
        <end position="335"/>
    </location>
</feature>
<feature type="zinc finger region" description="RING-type" evidence="3">
    <location>
        <begin position="287"/>
        <end position="322"/>
    </location>
</feature>
<feature type="region of interest" description="WRD domain">
    <location>
        <begin position="196"/>
        <end position="232"/>
    </location>
</feature>
<feature type="sequence conflict" description="In Ref. 5; AAM67026." evidence="6" ref="5">
    <original>S</original>
    <variation>N</variation>
    <location>
        <position position="25"/>
    </location>
</feature>
<feature type="sequence conflict" description="In Ref. 5; AAM67026." evidence="6" ref="5">
    <original>R</original>
    <variation>G</variation>
    <location>
        <position position="63"/>
    </location>
</feature>
<feature type="sequence conflict" description="In Ref. 5; AAM67026." evidence="6" ref="5">
    <original>N</original>
    <variation>K</variation>
    <location>
        <position position="108"/>
    </location>
</feature>
<feature type="sequence conflict" description="In Ref. 5; AAM67026." evidence="6" ref="5">
    <original>C</original>
    <variation>Y</variation>
    <location>
        <position position="254"/>
    </location>
</feature>
<organism>
    <name type="scientific">Arabidopsis thaliana</name>
    <name type="common">Mouse-ear cress</name>
    <dbReference type="NCBI Taxonomy" id="3702"/>
    <lineage>
        <taxon>Eukaryota</taxon>
        <taxon>Viridiplantae</taxon>
        <taxon>Streptophyta</taxon>
        <taxon>Embryophyta</taxon>
        <taxon>Tracheophyta</taxon>
        <taxon>Spermatophyta</taxon>
        <taxon>Magnoliopsida</taxon>
        <taxon>eudicotyledons</taxon>
        <taxon>Gunneridae</taxon>
        <taxon>Pentapetalae</taxon>
        <taxon>rosids</taxon>
        <taxon>malvids</taxon>
        <taxon>Brassicales</taxon>
        <taxon>Brassicaceae</taxon>
        <taxon>Camelineae</taxon>
        <taxon>Arabidopsis</taxon>
    </lineage>
</organism>
<gene>
    <name type="primary">BRG3</name>
    <name type="ordered locus">At3g12920</name>
    <name type="ORF">MGH6.3</name>
</gene>